<sequence>MGQSTLIRAKVGDRFSIGDGCPLTLFGGPCVIEGEDFSLKMAESIAKVCDRLGVQFVFKSSFDKANRTSIGSFRGYGLEEGLRILERVKTELGLPVLTDIHESQQAATVAEVVDILQIPAFLCRQTDLLLAAAATGRTVNVKKAQFLAPWDMKNVVNKLRQGGAENLLLTERGSCFGYNALVVDFRSLPLMRELGCPVVFDATHSVQIPGGAGDRSSGQREFVPVLARAAAAVGIDALFMEIHENPDQALSDGPNMIRLADLEATLRHILRVREAVAEPIGASA</sequence>
<name>KDSA_SYNP6</name>
<keyword id="KW-0963">Cytoplasm</keyword>
<keyword id="KW-0448">Lipopolysaccharide biosynthesis</keyword>
<keyword id="KW-0808">Transferase</keyword>
<comment type="catalytic activity">
    <reaction evidence="1">
        <text>D-arabinose 5-phosphate + phosphoenolpyruvate + H2O = 3-deoxy-alpha-D-manno-2-octulosonate-8-phosphate + phosphate</text>
        <dbReference type="Rhea" id="RHEA:14053"/>
        <dbReference type="ChEBI" id="CHEBI:15377"/>
        <dbReference type="ChEBI" id="CHEBI:43474"/>
        <dbReference type="ChEBI" id="CHEBI:57693"/>
        <dbReference type="ChEBI" id="CHEBI:58702"/>
        <dbReference type="ChEBI" id="CHEBI:85985"/>
        <dbReference type="EC" id="2.5.1.55"/>
    </reaction>
</comment>
<comment type="pathway">
    <text evidence="1">Carbohydrate biosynthesis; 3-deoxy-D-manno-octulosonate biosynthesis; 3-deoxy-D-manno-octulosonate from D-ribulose 5-phosphate: step 2/3.</text>
</comment>
<comment type="pathway">
    <text evidence="1">Bacterial outer membrane biogenesis; lipopolysaccharide biosynthesis.</text>
</comment>
<comment type="subcellular location">
    <subcellularLocation>
        <location evidence="1">Cytoplasm</location>
    </subcellularLocation>
</comment>
<comment type="similarity">
    <text evidence="1">Belongs to the KdsA family.</text>
</comment>
<reference key="1">
    <citation type="journal article" date="2007" name="Photosyn. Res.">
        <title>Complete nucleotide sequence of the freshwater unicellular cyanobacterium Synechococcus elongatus PCC 6301 chromosome: gene content and organization.</title>
        <authorList>
            <person name="Sugita C."/>
            <person name="Ogata K."/>
            <person name="Shikata M."/>
            <person name="Jikuya H."/>
            <person name="Takano J."/>
            <person name="Furumichi M."/>
            <person name="Kanehisa M."/>
            <person name="Omata T."/>
            <person name="Sugiura M."/>
            <person name="Sugita M."/>
        </authorList>
    </citation>
    <scope>NUCLEOTIDE SEQUENCE [LARGE SCALE GENOMIC DNA]</scope>
    <source>
        <strain>ATCC 27144 / PCC 6301 / SAUG 1402/1</strain>
    </source>
</reference>
<gene>
    <name evidence="1" type="primary">kdsA</name>
    <name type="ordered locus">syc1811_d</name>
</gene>
<protein>
    <recommendedName>
        <fullName evidence="1">2-dehydro-3-deoxyphosphooctonate aldolase</fullName>
        <ecNumber evidence="1">2.5.1.55</ecNumber>
    </recommendedName>
    <alternativeName>
        <fullName evidence="1">3-deoxy-D-manno-octulosonic acid 8-phosphate synthase</fullName>
    </alternativeName>
    <alternativeName>
        <fullName evidence="1">KDO-8-phosphate synthase</fullName>
        <shortName evidence="1">KDO 8-P synthase</shortName>
        <shortName evidence="1">KDOPS</shortName>
    </alternativeName>
    <alternativeName>
        <fullName evidence="1">Phospho-2-dehydro-3-deoxyoctonate aldolase</fullName>
    </alternativeName>
</protein>
<evidence type="ECO:0000255" key="1">
    <source>
        <dbReference type="HAMAP-Rule" id="MF_00056"/>
    </source>
</evidence>
<accession>Q5N119</accession>
<dbReference type="EC" id="2.5.1.55" evidence="1"/>
<dbReference type="EMBL" id="AP008231">
    <property type="protein sequence ID" value="BAD80001.1"/>
    <property type="molecule type" value="Genomic_DNA"/>
</dbReference>
<dbReference type="RefSeq" id="WP_011244121.1">
    <property type="nucleotide sequence ID" value="NC_006576.1"/>
</dbReference>
<dbReference type="SMR" id="Q5N119"/>
<dbReference type="KEGG" id="syc:syc1811_d"/>
<dbReference type="eggNOG" id="COG2877">
    <property type="taxonomic scope" value="Bacteria"/>
</dbReference>
<dbReference type="UniPathway" id="UPA00030"/>
<dbReference type="UniPathway" id="UPA00357">
    <property type="reaction ID" value="UER00474"/>
</dbReference>
<dbReference type="Proteomes" id="UP000001175">
    <property type="component" value="Chromosome"/>
</dbReference>
<dbReference type="GO" id="GO:0005737">
    <property type="term" value="C:cytoplasm"/>
    <property type="evidence" value="ECO:0007669"/>
    <property type="project" value="UniProtKB-SubCell"/>
</dbReference>
<dbReference type="GO" id="GO:0008676">
    <property type="term" value="F:3-deoxy-8-phosphooctulonate synthase activity"/>
    <property type="evidence" value="ECO:0007669"/>
    <property type="project" value="UniProtKB-UniRule"/>
</dbReference>
<dbReference type="GO" id="GO:0019294">
    <property type="term" value="P:keto-3-deoxy-D-manno-octulosonic acid biosynthetic process"/>
    <property type="evidence" value="ECO:0007669"/>
    <property type="project" value="UniProtKB-UniRule"/>
</dbReference>
<dbReference type="Gene3D" id="3.20.20.70">
    <property type="entry name" value="Aldolase class I"/>
    <property type="match status" value="1"/>
</dbReference>
<dbReference type="HAMAP" id="MF_00056">
    <property type="entry name" value="KDO8P_synth"/>
    <property type="match status" value="1"/>
</dbReference>
<dbReference type="InterPro" id="IPR013785">
    <property type="entry name" value="Aldolase_TIM"/>
</dbReference>
<dbReference type="InterPro" id="IPR006218">
    <property type="entry name" value="DAHP1/KDSA"/>
</dbReference>
<dbReference type="InterPro" id="IPR006269">
    <property type="entry name" value="KDO8P_synthase"/>
</dbReference>
<dbReference type="NCBIfam" id="TIGR01362">
    <property type="entry name" value="KDO8P_synth"/>
    <property type="match status" value="1"/>
</dbReference>
<dbReference type="NCBIfam" id="NF003543">
    <property type="entry name" value="PRK05198.1"/>
    <property type="match status" value="1"/>
</dbReference>
<dbReference type="PANTHER" id="PTHR21057">
    <property type="entry name" value="PHOSPHO-2-DEHYDRO-3-DEOXYHEPTONATE ALDOLASE"/>
    <property type="match status" value="1"/>
</dbReference>
<dbReference type="Pfam" id="PF00793">
    <property type="entry name" value="DAHP_synth_1"/>
    <property type="match status" value="1"/>
</dbReference>
<dbReference type="SUPFAM" id="SSF51569">
    <property type="entry name" value="Aldolase"/>
    <property type="match status" value="1"/>
</dbReference>
<feature type="chain" id="PRO_0000304496" description="2-dehydro-3-deoxyphosphooctonate aldolase">
    <location>
        <begin position="1"/>
        <end position="284"/>
    </location>
</feature>
<organism>
    <name type="scientific">Synechococcus sp. (strain ATCC 27144 / PCC 6301 / SAUG 1402/1)</name>
    <name type="common">Anacystis nidulans</name>
    <dbReference type="NCBI Taxonomy" id="269084"/>
    <lineage>
        <taxon>Bacteria</taxon>
        <taxon>Bacillati</taxon>
        <taxon>Cyanobacteriota</taxon>
        <taxon>Cyanophyceae</taxon>
        <taxon>Synechococcales</taxon>
        <taxon>Synechococcaceae</taxon>
        <taxon>Synechococcus</taxon>
    </lineage>
</organism>
<proteinExistence type="inferred from homology"/>